<gene>
    <name type="primary">fdx</name>
    <name type="ordered locus">TM_0927</name>
</gene>
<sequence length="60" mass="6213">MKVRVDADACIGCGVCENLCPDVFQLGDDGKAKVLQPETDLPCAKDAADSCPTGAISVEE</sequence>
<proteinExistence type="evidence at protein level"/>
<reference key="1">
    <citation type="journal article" date="1994" name="EMBO J.">
        <title>Sequence, assembly and evolution of a primordial ferredoxin from Thermotoga maritima.</title>
        <authorList>
            <person name="Darimont B."/>
            <person name="Sterner R."/>
        </authorList>
    </citation>
    <scope>NUCLEOTIDE SEQUENCE [GENOMIC DNA]</scope>
    <scope>PARTIAL PROTEIN SEQUENCE</scope>
    <source>
        <strain>ATCC 43589 / DSM 3109 / JCM 10099 / NBRC 100826 / MSB8</strain>
    </source>
</reference>
<reference key="2">
    <citation type="journal article" date="1999" name="Nature">
        <title>Evidence for lateral gene transfer between Archaea and Bacteria from genome sequence of Thermotoga maritima.</title>
        <authorList>
            <person name="Nelson K.E."/>
            <person name="Clayton R.A."/>
            <person name="Gill S.R."/>
            <person name="Gwinn M.L."/>
            <person name="Dodson R.J."/>
            <person name="Haft D.H."/>
            <person name="Hickey E.K."/>
            <person name="Peterson J.D."/>
            <person name="Nelson W.C."/>
            <person name="Ketchum K.A."/>
            <person name="McDonald L.A."/>
            <person name="Utterback T.R."/>
            <person name="Malek J.A."/>
            <person name="Linher K.D."/>
            <person name="Garrett M.M."/>
            <person name="Stewart A.M."/>
            <person name="Cotton M.D."/>
            <person name="Pratt M.S."/>
            <person name="Phillips C.A."/>
            <person name="Richardson D.L."/>
            <person name="Heidelberg J.F."/>
            <person name="Sutton G.G."/>
            <person name="Fleischmann R.D."/>
            <person name="Eisen J.A."/>
            <person name="White O."/>
            <person name="Salzberg S.L."/>
            <person name="Smith H.O."/>
            <person name="Venter J.C."/>
            <person name="Fraser C.M."/>
        </authorList>
    </citation>
    <scope>NUCLEOTIDE SEQUENCE [LARGE SCALE GENOMIC DNA]</scope>
    <source>
        <strain>ATCC 43589 / DSM 3109 / JCM 10099 / NBRC 100826 / MSB8</strain>
    </source>
</reference>
<reference key="3">
    <citation type="journal article" date="1996" name="Structure">
        <title>Small structural changes account for the high thermostability of 1[4Fe-4S] ferredoxin from the hyperthermophilic bacterium Thermotoga maritima.</title>
        <authorList>
            <person name="Macedo-Ribeiro S."/>
            <person name="Darimont B."/>
            <person name="Sterner R."/>
            <person name="Huber R."/>
        </authorList>
    </citation>
    <scope>X-RAY CRYSTALLOGRAPHY (1.75 ANGSTROMS)</scope>
</reference>
<reference key="4">
    <citation type="journal article" date="1996" name="Eur. J. Biochem.">
        <title>An NMR-derived model for the solution structure of oxidized Thermotoga maritima 1[Fe4-S4] ferredoxin.</title>
        <authorList>
            <person name="Sticht H."/>
            <person name="Wildegger G."/>
            <person name="Bentrop D."/>
            <person name="Darimont B."/>
            <person name="Sterner R."/>
            <person name="Roesch P."/>
        </authorList>
    </citation>
    <scope>STRUCTURE BY NMR</scope>
</reference>
<accession>P46797</accession>
<comment type="function">
    <text>Ferredoxins are iron-sulfur proteins that transfer electrons in a wide variety of metabolic reactions.</text>
</comment>
<comment type="cofactor">
    <cofactor>
        <name>[4Fe-4S] cluster</name>
        <dbReference type="ChEBI" id="CHEBI:49883"/>
    </cofactor>
    <text>Binds 1 [4Fe-4S] cluster.</text>
</comment>
<comment type="subunit">
    <text>Monomer.</text>
</comment>
<protein>
    <recommendedName>
        <fullName>Ferredoxin</fullName>
    </recommendedName>
</protein>
<keyword id="KW-0002">3D-structure</keyword>
<keyword id="KW-0004">4Fe-4S</keyword>
<keyword id="KW-0903">Direct protein sequencing</keyword>
<keyword id="KW-1015">Disulfide bond</keyword>
<keyword id="KW-0249">Electron transport</keyword>
<keyword id="KW-0408">Iron</keyword>
<keyword id="KW-0411">Iron-sulfur</keyword>
<keyword id="KW-0479">Metal-binding</keyword>
<keyword id="KW-1185">Reference proteome</keyword>
<keyword id="KW-0677">Repeat</keyword>
<keyword id="KW-0813">Transport</keyword>
<name>FER_THEMA</name>
<evidence type="ECO:0000255" key="1">
    <source>
        <dbReference type="PROSITE-ProRule" id="PRU00711"/>
    </source>
</evidence>
<evidence type="ECO:0000269" key="2">
    <source>
    </source>
</evidence>
<evidence type="ECO:0007829" key="3">
    <source>
        <dbReference type="PDB" id="1ROF"/>
    </source>
</evidence>
<evidence type="ECO:0007829" key="4">
    <source>
        <dbReference type="PDB" id="1VJW"/>
    </source>
</evidence>
<organism>
    <name type="scientific">Thermotoga maritima (strain ATCC 43589 / DSM 3109 / JCM 10099 / NBRC 100826 / MSB8)</name>
    <dbReference type="NCBI Taxonomy" id="243274"/>
    <lineage>
        <taxon>Bacteria</taxon>
        <taxon>Thermotogati</taxon>
        <taxon>Thermotogota</taxon>
        <taxon>Thermotogae</taxon>
        <taxon>Thermotogales</taxon>
        <taxon>Thermotogaceae</taxon>
        <taxon>Thermotoga</taxon>
    </lineage>
</organism>
<dbReference type="EMBL" id="X82178">
    <property type="protein sequence ID" value="CAA57669.1"/>
    <property type="molecule type" value="Genomic_DNA"/>
</dbReference>
<dbReference type="EMBL" id="U24145">
    <property type="protein sequence ID" value="AAA65437.1"/>
    <property type="molecule type" value="Genomic_DNA"/>
</dbReference>
<dbReference type="EMBL" id="AE000512">
    <property type="protein sequence ID" value="AAD36008.1"/>
    <property type="molecule type" value="Genomic_DNA"/>
</dbReference>
<dbReference type="PIR" id="S44350">
    <property type="entry name" value="S44350"/>
</dbReference>
<dbReference type="RefSeq" id="NP_228735.1">
    <property type="nucleotide sequence ID" value="NC_000853.1"/>
</dbReference>
<dbReference type="RefSeq" id="WP_004080635.1">
    <property type="nucleotide sequence ID" value="NZ_CP011107.1"/>
</dbReference>
<dbReference type="PDB" id="1ROF">
    <property type="method" value="NMR"/>
    <property type="chains" value="A=1-60"/>
</dbReference>
<dbReference type="PDB" id="1VJW">
    <property type="method" value="X-ray"/>
    <property type="resolution" value="1.75 A"/>
    <property type="chains" value="A=1-60"/>
</dbReference>
<dbReference type="PDBsum" id="1ROF"/>
<dbReference type="PDBsum" id="1VJW"/>
<dbReference type="SMR" id="P46797"/>
<dbReference type="FunCoup" id="P46797">
    <property type="interactions" value="6"/>
</dbReference>
<dbReference type="STRING" id="243274.TM_0927"/>
<dbReference type="PaxDb" id="243274-THEMA_09715"/>
<dbReference type="EnsemblBacteria" id="AAD36008">
    <property type="protein sequence ID" value="AAD36008"/>
    <property type="gene ID" value="TM_0927"/>
</dbReference>
<dbReference type="KEGG" id="tma:TM0927"/>
<dbReference type="KEGG" id="tmi:THEMA_09715"/>
<dbReference type="KEGG" id="tmm:Tmari_0929"/>
<dbReference type="KEGG" id="tmw:THMA_0949"/>
<dbReference type="eggNOG" id="COG1141">
    <property type="taxonomic scope" value="Bacteria"/>
</dbReference>
<dbReference type="InParanoid" id="P46797"/>
<dbReference type="OrthoDB" id="9803319at2"/>
<dbReference type="EvolutionaryTrace" id="P46797"/>
<dbReference type="Proteomes" id="UP000008183">
    <property type="component" value="Chromosome"/>
</dbReference>
<dbReference type="GO" id="GO:0051539">
    <property type="term" value="F:4 iron, 4 sulfur cluster binding"/>
    <property type="evidence" value="ECO:0007669"/>
    <property type="project" value="UniProtKB-KW"/>
</dbReference>
<dbReference type="GO" id="GO:0009055">
    <property type="term" value="F:electron transfer activity"/>
    <property type="evidence" value="ECO:0007669"/>
    <property type="project" value="InterPro"/>
</dbReference>
<dbReference type="GO" id="GO:0005506">
    <property type="term" value="F:iron ion binding"/>
    <property type="evidence" value="ECO:0007669"/>
    <property type="project" value="InterPro"/>
</dbReference>
<dbReference type="Gene3D" id="3.30.70.20">
    <property type="match status" value="1"/>
</dbReference>
<dbReference type="InterPro" id="IPR001080">
    <property type="entry name" value="3Fe4S_ferredoxin"/>
</dbReference>
<dbReference type="InterPro" id="IPR017896">
    <property type="entry name" value="4Fe4S_Fe-S-bd"/>
</dbReference>
<dbReference type="InterPro" id="IPR017900">
    <property type="entry name" value="4Fe4S_Fe_S_CS"/>
</dbReference>
<dbReference type="InterPro" id="IPR051269">
    <property type="entry name" value="Fe-S_cluster_ET"/>
</dbReference>
<dbReference type="PANTHER" id="PTHR36923">
    <property type="entry name" value="FERREDOXIN"/>
    <property type="match status" value="1"/>
</dbReference>
<dbReference type="PANTHER" id="PTHR36923:SF3">
    <property type="entry name" value="FERREDOXIN"/>
    <property type="match status" value="1"/>
</dbReference>
<dbReference type="Pfam" id="PF13459">
    <property type="entry name" value="Fer4_15"/>
    <property type="match status" value="1"/>
</dbReference>
<dbReference type="PRINTS" id="PR00352">
    <property type="entry name" value="3FE4SFRDOXIN"/>
</dbReference>
<dbReference type="SUPFAM" id="SSF54862">
    <property type="entry name" value="4Fe-4S ferredoxins"/>
    <property type="match status" value="1"/>
</dbReference>
<dbReference type="PROSITE" id="PS00198">
    <property type="entry name" value="4FE4S_FER_1"/>
    <property type="match status" value="1"/>
</dbReference>
<dbReference type="PROSITE" id="PS51379">
    <property type="entry name" value="4FE4S_FER_2"/>
    <property type="match status" value="2"/>
</dbReference>
<feature type="chain" id="PRO_0000159203" description="Ferredoxin">
    <location>
        <begin position="1"/>
        <end position="60"/>
    </location>
</feature>
<feature type="domain" description="4Fe-4S ferredoxin-type 1" evidence="1">
    <location>
        <begin position="2"/>
        <end position="29"/>
    </location>
</feature>
<feature type="domain" description="4Fe-4S ferredoxin-type 2" evidence="1">
    <location>
        <begin position="30"/>
        <end position="60"/>
    </location>
</feature>
<feature type="binding site" evidence="2">
    <location>
        <position position="10"/>
    </location>
    <ligand>
        <name>[4Fe-4S] cluster</name>
        <dbReference type="ChEBI" id="CHEBI:49883"/>
    </ligand>
</feature>
<feature type="binding site" evidence="2">
    <location>
        <position position="13"/>
    </location>
    <ligand>
        <name>[4Fe-4S] cluster</name>
        <dbReference type="ChEBI" id="CHEBI:49883"/>
    </ligand>
</feature>
<feature type="binding site" evidence="2">
    <location>
        <position position="16"/>
    </location>
    <ligand>
        <name>[4Fe-4S] cluster</name>
        <dbReference type="ChEBI" id="CHEBI:49883"/>
    </ligand>
</feature>
<feature type="binding site" evidence="2">
    <location>
        <position position="51"/>
    </location>
    <ligand>
        <name>[4Fe-4S] cluster</name>
        <dbReference type="ChEBI" id="CHEBI:49883"/>
    </ligand>
</feature>
<feature type="disulfide bond" evidence="2">
    <location>
        <begin position="20"/>
        <end position="43"/>
    </location>
</feature>
<feature type="strand" evidence="3">
    <location>
        <begin position="3"/>
        <end position="5"/>
    </location>
</feature>
<feature type="turn" evidence="4">
    <location>
        <begin position="7"/>
        <end position="9"/>
    </location>
</feature>
<feature type="helix" evidence="4">
    <location>
        <begin position="15"/>
        <end position="19"/>
    </location>
</feature>
<feature type="turn" evidence="4">
    <location>
        <begin position="21"/>
        <end position="23"/>
    </location>
</feature>
<feature type="strand" evidence="4">
    <location>
        <begin position="24"/>
        <end position="26"/>
    </location>
</feature>
<feature type="strand" evidence="4">
    <location>
        <begin position="30"/>
        <end position="35"/>
    </location>
</feature>
<feature type="helix" evidence="4">
    <location>
        <begin position="43"/>
        <end position="50"/>
    </location>
</feature>